<dbReference type="EMBL" id="AE004439">
    <property type="protein sequence ID" value="AAK03574.1"/>
    <property type="molecule type" value="Genomic_DNA"/>
</dbReference>
<dbReference type="RefSeq" id="WP_005718050.1">
    <property type="nucleotide sequence ID" value="NC_002663.1"/>
</dbReference>
<dbReference type="SMR" id="Q9CKW4"/>
<dbReference type="STRING" id="272843.PM1490"/>
<dbReference type="EnsemblBacteria" id="AAK03574">
    <property type="protein sequence ID" value="AAK03574"/>
    <property type="gene ID" value="PM1490"/>
</dbReference>
<dbReference type="GeneID" id="77206950"/>
<dbReference type="KEGG" id="pmu:PM1490"/>
<dbReference type="PATRIC" id="fig|272843.6.peg.1505"/>
<dbReference type="HOGENOM" id="CLU_079215_4_5_6"/>
<dbReference type="OrthoDB" id="9788020at2"/>
<dbReference type="Proteomes" id="UP000000809">
    <property type="component" value="Chromosome"/>
</dbReference>
<dbReference type="GO" id="GO:0005886">
    <property type="term" value="C:plasma membrane"/>
    <property type="evidence" value="ECO:0007669"/>
    <property type="project" value="UniProtKB-SubCell"/>
</dbReference>
<dbReference type="GO" id="GO:0045259">
    <property type="term" value="C:proton-transporting ATP synthase complex"/>
    <property type="evidence" value="ECO:0007669"/>
    <property type="project" value="UniProtKB-KW"/>
</dbReference>
<dbReference type="GO" id="GO:0046933">
    <property type="term" value="F:proton-transporting ATP synthase activity, rotational mechanism"/>
    <property type="evidence" value="ECO:0007669"/>
    <property type="project" value="UniProtKB-UniRule"/>
</dbReference>
<dbReference type="GO" id="GO:0046961">
    <property type="term" value="F:proton-transporting ATPase activity, rotational mechanism"/>
    <property type="evidence" value="ECO:0007669"/>
    <property type="project" value="TreeGrafter"/>
</dbReference>
<dbReference type="CDD" id="cd06503">
    <property type="entry name" value="ATP-synt_Fo_b"/>
    <property type="match status" value="1"/>
</dbReference>
<dbReference type="FunFam" id="1.20.5.620:FF:000001">
    <property type="entry name" value="ATP synthase subunit b"/>
    <property type="match status" value="1"/>
</dbReference>
<dbReference type="Gene3D" id="1.20.5.620">
    <property type="entry name" value="F1F0 ATP synthase subunit B, membrane domain"/>
    <property type="match status" value="1"/>
</dbReference>
<dbReference type="HAMAP" id="MF_01398">
    <property type="entry name" value="ATP_synth_b_bprime"/>
    <property type="match status" value="1"/>
</dbReference>
<dbReference type="InterPro" id="IPR028987">
    <property type="entry name" value="ATP_synth_B-like_membr_sf"/>
</dbReference>
<dbReference type="InterPro" id="IPR002146">
    <property type="entry name" value="ATP_synth_b/b'su_bac/chlpt"/>
</dbReference>
<dbReference type="InterPro" id="IPR005864">
    <property type="entry name" value="ATP_synth_F0_bsu_bac"/>
</dbReference>
<dbReference type="InterPro" id="IPR050059">
    <property type="entry name" value="ATP_synthase_B_chain"/>
</dbReference>
<dbReference type="NCBIfam" id="TIGR01144">
    <property type="entry name" value="ATP_synt_b"/>
    <property type="match status" value="1"/>
</dbReference>
<dbReference type="NCBIfam" id="NF004411">
    <property type="entry name" value="PRK05759.1-2"/>
    <property type="match status" value="1"/>
</dbReference>
<dbReference type="NCBIfam" id="NF004413">
    <property type="entry name" value="PRK05759.1-4"/>
    <property type="match status" value="1"/>
</dbReference>
<dbReference type="PANTHER" id="PTHR33445:SF1">
    <property type="entry name" value="ATP SYNTHASE SUBUNIT B"/>
    <property type="match status" value="1"/>
</dbReference>
<dbReference type="PANTHER" id="PTHR33445">
    <property type="entry name" value="ATP SYNTHASE SUBUNIT B', CHLOROPLASTIC"/>
    <property type="match status" value="1"/>
</dbReference>
<dbReference type="Pfam" id="PF00430">
    <property type="entry name" value="ATP-synt_B"/>
    <property type="match status" value="1"/>
</dbReference>
<dbReference type="SUPFAM" id="SSF81573">
    <property type="entry name" value="F1F0 ATP synthase subunit B, membrane domain"/>
    <property type="match status" value="1"/>
</dbReference>
<evidence type="ECO:0000255" key="1">
    <source>
        <dbReference type="HAMAP-Rule" id="MF_01398"/>
    </source>
</evidence>
<sequence length="156" mass="17274">MNLNATLIGQLIAFAIFVAFCMKFVWPPIIKAIEERQRSIANALASAEAARKEQADTKALVEQEITEAKMQAQQIIDLANKRRNEILEEVKVEAEATKAKIIEQGYAEVEAERKRVQEELRVKVASLAIAGAEKIVGRTVDEAANSDIIDKLVAEL</sequence>
<keyword id="KW-0066">ATP synthesis</keyword>
<keyword id="KW-0997">Cell inner membrane</keyword>
<keyword id="KW-1003">Cell membrane</keyword>
<keyword id="KW-0138">CF(0)</keyword>
<keyword id="KW-0375">Hydrogen ion transport</keyword>
<keyword id="KW-0406">Ion transport</keyword>
<keyword id="KW-0472">Membrane</keyword>
<keyword id="KW-1185">Reference proteome</keyword>
<keyword id="KW-0812">Transmembrane</keyword>
<keyword id="KW-1133">Transmembrane helix</keyword>
<keyword id="KW-0813">Transport</keyword>
<reference key="1">
    <citation type="journal article" date="2001" name="Proc. Natl. Acad. Sci. U.S.A.">
        <title>Complete genomic sequence of Pasteurella multocida Pm70.</title>
        <authorList>
            <person name="May B.J."/>
            <person name="Zhang Q."/>
            <person name="Li L.L."/>
            <person name="Paustian M.L."/>
            <person name="Whittam T.S."/>
            <person name="Kapur V."/>
        </authorList>
    </citation>
    <scope>NUCLEOTIDE SEQUENCE [LARGE SCALE GENOMIC DNA]</scope>
    <source>
        <strain>Pm70</strain>
    </source>
</reference>
<feature type="chain" id="PRO_0000368645" description="ATP synthase subunit b">
    <location>
        <begin position="1"/>
        <end position="156"/>
    </location>
</feature>
<feature type="transmembrane region" description="Helical" evidence="1">
    <location>
        <begin position="7"/>
        <end position="27"/>
    </location>
</feature>
<gene>
    <name evidence="1" type="primary">atpF</name>
    <name type="ordered locus">PM1490</name>
</gene>
<accession>Q9CKW4</accession>
<organism>
    <name type="scientific">Pasteurella multocida (strain Pm70)</name>
    <dbReference type="NCBI Taxonomy" id="272843"/>
    <lineage>
        <taxon>Bacteria</taxon>
        <taxon>Pseudomonadati</taxon>
        <taxon>Pseudomonadota</taxon>
        <taxon>Gammaproteobacteria</taxon>
        <taxon>Pasteurellales</taxon>
        <taxon>Pasteurellaceae</taxon>
        <taxon>Pasteurella</taxon>
    </lineage>
</organism>
<proteinExistence type="inferred from homology"/>
<protein>
    <recommendedName>
        <fullName evidence="1">ATP synthase subunit b</fullName>
    </recommendedName>
    <alternativeName>
        <fullName evidence="1">ATP synthase F(0) sector subunit b</fullName>
    </alternativeName>
    <alternativeName>
        <fullName evidence="1">ATPase subunit I</fullName>
    </alternativeName>
    <alternativeName>
        <fullName evidence="1">F-type ATPase subunit b</fullName>
        <shortName evidence="1">F-ATPase subunit b</shortName>
    </alternativeName>
</protein>
<comment type="function">
    <text evidence="1">F(1)F(0) ATP synthase produces ATP from ADP in the presence of a proton or sodium gradient. F-type ATPases consist of two structural domains, F(1) containing the extramembraneous catalytic core and F(0) containing the membrane proton channel, linked together by a central stalk and a peripheral stalk. During catalysis, ATP synthesis in the catalytic domain of F(1) is coupled via a rotary mechanism of the central stalk subunits to proton translocation.</text>
</comment>
<comment type="function">
    <text evidence="1">Component of the F(0) channel, it forms part of the peripheral stalk, linking F(1) to F(0).</text>
</comment>
<comment type="subunit">
    <text evidence="1">F-type ATPases have 2 components, F(1) - the catalytic core - and F(0) - the membrane proton channel. F(1) has five subunits: alpha(3), beta(3), gamma(1), delta(1), epsilon(1). F(0) has three main subunits: a(1), b(2) and c(10-14). The alpha and beta chains form an alternating ring which encloses part of the gamma chain. F(1) is attached to F(0) by a central stalk formed by the gamma and epsilon chains, while a peripheral stalk is formed by the delta and b chains.</text>
</comment>
<comment type="subcellular location">
    <subcellularLocation>
        <location evidence="1">Cell inner membrane</location>
        <topology evidence="1">Single-pass membrane protein</topology>
    </subcellularLocation>
</comment>
<comment type="similarity">
    <text evidence="1">Belongs to the ATPase B chain family.</text>
</comment>
<name>ATPF_PASMU</name>